<protein>
    <recommendedName>
        <fullName evidence="1">Cell division protein ZipA</fullName>
    </recommendedName>
</protein>
<proteinExistence type="inferred from homology"/>
<organism>
    <name type="scientific">Salmonella agona (strain SL483)</name>
    <dbReference type="NCBI Taxonomy" id="454166"/>
    <lineage>
        <taxon>Bacteria</taxon>
        <taxon>Pseudomonadati</taxon>
        <taxon>Pseudomonadota</taxon>
        <taxon>Gammaproteobacteria</taxon>
        <taxon>Enterobacterales</taxon>
        <taxon>Enterobacteriaceae</taxon>
        <taxon>Salmonella</taxon>
    </lineage>
</organism>
<dbReference type="EMBL" id="CP001138">
    <property type="protein sequence ID" value="ACH49296.1"/>
    <property type="molecule type" value="Genomic_DNA"/>
</dbReference>
<dbReference type="RefSeq" id="WP_000983134.1">
    <property type="nucleotide sequence ID" value="NC_011149.1"/>
</dbReference>
<dbReference type="SMR" id="B5F0F6"/>
<dbReference type="KEGG" id="sea:SeAg_B2572"/>
<dbReference type="HOGENOM" id="CLU_030174_1_0_6"/>
<dbReference type="Proteomes" id="UP000008819">
    <property type="component" value="Chromosome"/>
</dbReference>
<dbReference type="GO" id="GO:0032153">
    <property type="term" value="C:cell division site"/>
    <property type="evidence" value="ECO:0007669"/>
    <property type="project" value="UniProtKB-UniRule"/>
</dbReference>
<dbReference type="GO" id="GO:0005886">
    <property type="term" value="C:plasma membrane"/>
    <property type="evidence" value="ECO:0007669"/>
    <property type="project" value="UniProtKB-SubCell"/>
</dbReference>
<dbReference type="GO" id="GO:0000917">
    <property type="term" value="P:division septum assembly"/>
    <property type="evidence" value="ECO:0007669"/>
    <property type="project" value="TreeGrafter"/>
</dbReference>
<dbReference type="GO" id="GO:0043093">
    <property type="term" value="P:FtsZ-dependent cytokinesis"/>
    <property type="evidence" value="ECO:0007669"/>
    <property type="project" value="UniProtKB-UniRule"/>
</dbReference>
<dbReference type="CDD" id="cd00231">
    <property type="entry name" value="ZipA"/>
    <property type="match status" value="1"/>
</dbReference>
<dbReference type="FunFam" id="3.30.1400.10:FF:000001">
    <property type="entry name" value="Cell division protein ZipA"/>
    <property type="match status" value="1"/>
</dbReference>
<dbReference type="Gene3D" id="3.30.1400.10">
    <property type="entry name" value="ZipA, C-terminal FtsZ-binding domain"/>
    <property type="match status" value="1"/>
</dbReference>
<dbReference type="HAMAP" id="MF_00509">
    <property type="entry name" value="ZipA"/>
    <property type="match status" value="1"/>
</dbReference>
<dbReference type="InterPro" id="IPR011919">
    <property type="entry name" value="Cell_div_ZipA"/>
</dbReference>
<dbReference type="InterPro" id="IPR007449">
    <property type="entry name" value="ZipA_FtsZ-bd_C"/>
</dbReference>
<dbReference type="InterPro" id="IPR036765">
    <property type="entry name" value="ZipA_FtsZ-bd_C_sf"/>
</dbReference>
<dbReference type="NCBIfam" id="TIGR02205">
    <property type="entry name" value="septum_zipA"/>
    <property type="match status" value="1"/>
</dbReference>
<dbReference type="PANTHER" id="PTHR38685">
    <property type="entry name" value="CELL DIVISION PROTEIN ZIPA"/>
    <property type="match status" value="1"/>
</dbReference>
<dbReference type="PANTHER" id="PTHR38685:SF1">
    <property type="entry name" value="CELL DIVISION PROTEIN ZIPA"/>
    <property type="match status" value="1"/>
</dbReference>
<dbReference type="Pfam" id="PF04354">
    <property type="entry name" value="ZipA_C"/>
    <property type="match status" value="1"/>
</dbReference>
<dbReference type="SMART" id="SM00771">
    <property type="entry name" value="ZipA_C"/>
    <property type="match status" value="1"/>
</dbReference>
<dbReference type="SUPFAM" id="SSF64383">
    <property type="entry name" value="Cell-division protein ZipA, C-terminal domain"/>
    <property type="match status" value="1"/>
</dbReference>
<reference key="1">
    <citation type="journal article" date="2011" name="J. Bacteriol.">
        <title>Comparative genomics of 28 Salmonella enterica isolates: evidence for CRISPR-mediated adaptive sublineage evolution.</title>
        <authorList>
            <person name="Fricke W.F."/>
            <person name="Mammel M.K."/>
            <person name="McDermott P.F."/>
            <person name="Tartera C."/>
            <person name="White D.G."/>
            <person name="Leclerc J.E."/>
            <person name="Ravel J."/>
            <person name="Cebula T.A."/>
        </authorList>
    </citation>
    <scope>NUCLEOTIDE SEQUENCE [LARGE SCALE GENOMIC DNA]</scope>
    <source>
        <strain>SL483</strain>
    </source>
</reference>
<name>ZIPA_SALA4</name>
<keyword id="KW-0131">Cell cycle</keyword>
<keyword id="KW-0132">Cell division</keyword>
<keyword id="KW-0997">Cell inner membrane</keyword>
<keyword id="KW-1003">Cell membrane</keyword>
<keyword id="KW-0472">Membrane</keyword>
<keyword id="KW-0812">Transmembrane</keyword>
<keyword id="KW-1133">Transmembrane helix</keyword>
<sequence length="328" mass="36298">MMQDLRLILIIVGAIAIIALLVHGFWTSRKERSSMFRDRPLKRMKSKRDDDSYDDDVEEDEGVGEVRVHRVNHAPGQSQEHDAPRQSPQHQYQPPYASAQPRPAAPPQPQAPMQQPVQQPVQPASQPQQVQPSAPPVQPPQQQSAPPSQAPQPVAQPAPPPSAQTFQPAEPVVEAEPVVEEAPVVEKPQRKEAVIIMNVAAHHGSELNGEVLLNSIQQSGFKFGDMNIFHRHLSPDGSGPALFSLANMVNPGTFDPEMTDFTTPGVTIFMQVPSYGDALQNFKLMLQSAQHIADEVGGVVLDDQRRMMTPQKLREYQDRIREVMDANA</sequence>
<evidence type="ECO:0000255" key="1">
    <source>
        <dbReference type="HAMAP-Rule" id="MF_00509"/>
    </source>
</evidence>
<evidence type="ECO:0000256" key="2">
    <source>
        <dbReference type="SAM" id="MobiDB-lite"/>
    </source>
</evidence>
<comment type="function">
    <text evidence="1">Essential cell division protein that stabilizes the FtsZ protofilaments by cross-linking them and that serves as a cytoplasmic membrane anchor for the Z ring. Also required for the recruitment to the septal ring of downstream cell division proteins.</text>
</comment>
<comment type="subunit">
    <text evidence="1">Interacts with FtsZ via their C-terminal domains.</text>
</comment>
<comment type="subcellular location">
    <subcellularLocation>
        <location evidence="1">Cell inner membrane</location>
        <topology evidence="1">Single-pass type I membrane protein</topology>
    </subcellularLocation>
    <text evidence="1">Localizes to the Z ring in an FtsZ-dependent manner.</text>
</comment>
<comment type="similarity">
    <text evidence="1">Belongs to the ZipA family.</text>
</comment>
<gene>
    <name evidence="1" type="primary">zipA</name>
    <name type="ordered locus">SeAg_B2572</name>
</gene>
<accession>B5F0F6</accession>
<feature type="chain" id="PRO_1000127224" description="Cell division protein ZipA">
    <location>
        <begin position="1"/>
        <end position="328"/>
    </location>
</feature>
<feature type="topological domain" description="Periplasmic" evidence="1">
    <location>
        <begin position="1"/>
        <end position="6"/>
    </location>
</feature>
<feature type="transmembrane region" description="Helical" evidence="1">
    <location>
        <begin position="7"/>
        <end position="27"/>
    </location>
</feature>
<feature type="topological domain" description="Cytoplasmic" evidence="1">
    <location>
        <begin position="28"/>
        <end position="328"/>
    </location>
</feature>
<feature type="region of interest" description="Disordered" evidence="2">
    <location>
        <begin position="42"/>
        <end position="178"/>
    </location>
</feature>
<feature type="compositionally biased region" description="Acidic residues" evidence="2">
    <location>
        <begin position="51"/>
        <end position="63"/>
    </location>
</feature>
<feature type="compositionally biased region" description="Low complexity" evidence="2">
    <location>
        <begin position="85"/>
        <end position="102"/>
    </location>
</feature>
<feature type="compositionally biased region" description="Low complexity" evidence="2">
    <location>
        <begin position="111"/>
        <end position="132"/>
    </location>
</feature>
<feature type="compositionally biased region" description="Pro residues" evidence="2">
    <location>
        <begin position="148"/>
        <end position="162"/>
    </location>
</feature>
<feature type="compositionally biased region" description="Low complexity" evidence="2">
    <location>
        <begin position="168"/>
        <end position="178"/>
    </location>
</feature>